<comment type="subcellular location">
    <subcellularLocation>
        <location evidence="2">Membrane</location>
        <topology evidence="2">Single-pass membrane protein</topology>
    </subcellularLocation>
</comment>
<dbReference type="EMBL" id="BC135621">
    <property type="protein sequence ID" value="AAI35622.1"/>
    <property type="molecule type" value="mRNA"/>
</dbReference>
<dbReference type="RefSeq" id="NP_001096519.1">
    <property type="nucleotide sequence ID" value="NM_001103049.1"/>
</dbReference>
<dbReference type="RefSeq" id="XP_031757317.1">
    <property type="nucleotide sequence ID" value="XM_031901457.1"/>
</dbReference>
<dbReference type="SMR" id="A4QNG1"/>
<dbReference type="FunCoup" id="A4QNG1">
    <property type="interactions" value="130"/>
</dbReference>
<dbReference type="STRING" id="8364.ENSXETP00000022867"/>
<dbReference type="PaxDb" id="8364-ENSXETP00000017119"/>
<dbReference type="DNASU" id="100125155"/>
<dbReference type="GeneID" id="100125155"/>
<dbReference type="KEGG" id="xtr:100125155"/>
<dbReference type="AGR" id="Xenbase:XB-GENE-5947586"/>
<dbReference type="CTD" id="154467"/>
<dbReference type="Xenbase" id="XB-GENE-5947586">
    <property type="gene designation" value="ccdc167"/>
</dbReference>
<dbReference type="eggNOG" id="ENOG502SAF4">
    <property type="taxonomic scope" value="Eukaryota"/>
</dbReference>
<dbReference type="InParanoid" id="A4QNG1"/>
<dbReference type="OMA" id="MAIMNER"/>
<dbReference type="OrthoDB" id="6435278at2759"/>
<dbReference type="Proteomes" id="UP000008143">
    <property type="component" value="Chromosome 5"/>
</dbReference>
<dbReference type="GO" id="GO:0016020">
    <property type="term" value="C:membrane"/>
    <property type="evidence" value="ECO:0007669"/>
    <property type="project" value="UniProtKB-SubCell"/>
</dbReference>
<dbReference type="InterPro" id="IPR028194">
    <property type="entry name" value="CCDC-167"/>
</dbReference>
<dbReference type="PANTHER" id="PTHR31759">
    <property type="entry name" value="COILED-COIL DOMAIN-CONTAINING PROTEIN 167"/>
    <property type="match status" value="1"/>
</dbReference>
<dbReference type="PANTHER" id="PTHR31759:SF1">
    <property type="entry name" value="COILED-COIL DOMAIN-CONTAINING PROTEIN 167"/>
    <property type="match status" value="1"/>
</dbReference>
<dbReference type="Pfam" id="PF15188">
    <property type="entry name" value="CCDC-167"/>
    <property type="match status" value="1"/>
</dbReference>
<keyword id="KW-0175">Coiled coil</keyword>
<keyword id="KW-0472">Membrane</keyword>
<keyword id="KW-1185">Reference proteome</keyword>
<keyword id="KW-0812">Transmembrane</keyword>
<keyword id="KW-1133">Transmembrane helix</keyword>
<organism>
    <name type="scientific">Xenopus tropicalis</name>
    <name type="common">Western clawed frog</name>
    <name type="synonym">Silurana tropicalis</name>
    <dbReference type="NCBI Taxonomy" id="8364"/>
    <lineage>
        <taxon>Eukaryota</taxon>
        <taxon>Metazoa</taxon>
        <taxon>Chordata</taxon>
        <taxon>Craniata</taxon>
        <taxon>Vertebrata</taxon>
        <taxon>Euteleostomi</taxon>
        <taxon>Amphibia</taxon>
        <taxon>Batrachia</taxon>
        <taxon>Anura</taxon>
        <taxon>Pipoidea</taxon>
        <taxon>Pipidae</taxon>
        <taxon>Xenopodinae</taxon>
        <taxon>Xenopus</taxon>
        <taxon>Silurana</taxon>
    </lineage>
</organism>
<sequence>MGKKKKEKLSVAREIDGMEEKVALCKYNLDVIDVKLRKMELTEEGRKSLEKEKSSLSSRLSNYERELKSLRHENRKNMLLSVAIFLLFAVGYYCWTL</sequence>
<evidence type="ECO:0000255" key="1"/>
<evidence type="ECO:0000305" key="2"/>
<reference key="1">
    <citation type="submission" date="2007-03" db="EMBL/GenBank/DDBJ databases">
        <authorList>
            <consortium name="NIH - Xenopus Gene Collection (XGC) project"/>
        </authorList>
    </citation>
    <scope>NUCLEOTIDE SEQUENCE [LARGE SCALE MRNA]</scope>
    <source>
        <tissue>Embryo</tissue>
    </source>
</reference>
<accession>A4QNG1</accession>
<proteinExistence type="predicted"/>
<gene>
    <name type="primary">ccdc167</name>
</gene>
<name>CC167_XENTR</name>
<feature type="chain" id="PRO_0000308553" description="Coiled-coil domain-containing protein 167">
    <location>
        <begin position="1"/>
        <end position="97"/>
    </location>
</feature>
<feature type="transmembrane region" description="Helical" evidence="1">
    <location>
        <begin position="78"/>
        <end position="95"/>
    </location>
</feature>
<feature type="coiled-coil region" evidence="1">
    <location>
        <begin position="36"/>
        <end position="80"/>
    </location>
</feature>
<protein>
    <recommendedName>
        <fullName>Coiled-coil domain-containing protein 167</fullName>
    </recommendedName>
</protein>